<proteinExistence type="evidence at protein level"/>
<keyword id="KW-0009">Actin-binding</keyword>
<keyword id="KW-0020">Allergen</keyword>
<keyword id="KW-0963">Cytoplasm</keyword>
<keyword id="KW-0206">Cytoskeleton</keyword>
<protein>
    <recommendedName>
        <fullName>Profilin-1</fullName>
    </recommendedName>
    <alternativeName>
        <fullName>Pollen allergen Par j 3.0101</fullName>
    </alternativeName>
    <allergenName>Par j 3.0101</allergenName>
</protein>
<organism>
    <name type="scientific">Parietaria judaica</name>
    <name type="common">Pellitory-of-the-wall</name>
    <name type="synonym">Parietaria diffusa</name>
    <dbReference type="NCBI Taxonomy" id="33127"/>
    <lineage>
        <taxon>Eukaryota</taxon>
        <taxon>Viridiplantae</taxon>
        <taxon>Streptophyta</taxon>
        <taxon>Embryophyta</taxon>
        <taxon>Tracheophyta</taxon>
        <taxon>Spermatophyta</taxon>
        <taxon>Magnoliopsida</taxon>
        <taxon>eudicotyledons</taxon>
        <taxon>Gunneridae</taxon>
        <taxon>Pentapetalae</taxon>
        <taxon>rosids</taxon>
        <taxon>fabids</taxon>
        <taxon>Rosales</taxon>
        <taxon>Urticaceae</taxon>
        <taxon>Parietaria</taxon>
    </lineage>
</organism>
<feature type="initiator methionine" description="Removed" evidence="1">
    <location>
        <position position="1"/>
    </location>
</feature>
<feature type="chain" id="PRO_0000199661" description="Profilin-1">
    <location>
        <begin position="2"/>
        <end position="132"/>
    </location>
</feature>
<gene>
    <name type="primary">PRO1</name>
</gene>
<evidence type="ECO:0000250" key="1"/>
<evidence type="ECO:0000305" key="2"/>
<reference key="1">
    <citation type="submission" date="1997-10" db="EMBL/GenBank/DDBJ databases">
        <title>Analysis of recombinant allergen Par j 3 (profilin) from Parietaria judaica.</title>
        <authorList>
            <person name="Asturias J.A."/>
            <person name="Arilla M.C."/>
            <person name="Gomez-Bayon N."/>
            <person name="Martinez A."/>
            <person name="Martinez J."/>
            <person name="Palacios R."/>
        </authorList>
    </citation>
    <scope>NUCLEOTIDE SEQUENCE [MRNA]</scope>
    <source>
        <tissue>Pollen</tissue>
    </source>
</reference>
<comment type="function">
    <text evidence="1">Binds to actin and affects the structure of the cytoskeleton. At high concentrations, profilin prevents the polymerization of actin, whereas it enhances it at low concentrations. By binding to PIP2, it inhibits the formation of IP3 and DG (By similarity).</text>
</comment>
<comment type="subunit">
    <text>Occurs in many kinds of cells as a complex with monomeric actin in a 1:1 ratio.</text>
</comment>
<comment type="subcellular location">
    <subcellularLocation>
        <location evidence="1">Cytoplasm</location>
        <location evidence="1">Cytoskeleton</location>
    </subcellularLocation>
</comment>
<comment type="allergen">
    <text>Causes an allergic reaction in human.</text>
</comment>
<comment type="similarity">
    <text evidence="2">Belongs to the profilin family.</text>
</comment>
<name>PROF1_PARJU</name>
<dbReference type="EMBL" id="Y15208">
    <property type="protein sequence ID" value="CAB44256.1"/>
    <property type="molecule type" value="mRNA"/>
</dbReference>
<dbReference type="SMR" id="Q9XG85"/>
<dbReference type="Allergome" id="510">
    <property type="allergen name" value="Par j 3"/>
</dbReference>
<dbReference type="Allergome" id="511">
    <property type="allergen name" value="Par j 3.0101"/>
</dbReference>
<dbReference type="GO" id="GO:0005938">
    <property type="term" value="C:cell cortex"/>
    <property type="evidence" value="ECO:0007669"/>
    <property type="project" value="TreeGrafter"/>
</dbReference>
<dbReference type="GO" id="GO:0005856">
    <property type="term" value="C:cytoskeleton"/>
    <property type="evidence" value="ECO:0007669"/>
    <property type="project" value="UniProtKB-SubCell"/>
</dbReference>
<dbReference type="GO" id="GO:0003785">
    <property type="term" value="F:actin monomer binding"/>
    <property type="evidence" value="ECO:0007669"/>
    <property type="project" value="TreeGrafter"/>
</dbReference>
<dbReference type="CDD" id="cd00148">
    <property type="entry name" value="PROF"/>
    <property type="match status" value="1"/>
</dbReference>
<dbReference type="FunFam" id="3.30.450.30:FF:000001">
    <property type="entry name" value="Profilin"/>
    <property type="match status" value="1"/>
</dbReference>
<dbReference type="Gene3D" id="3.30.450.30">
    <property type="entry name" value="Dynein light chain 2a, cytoplasmic"/>
    <property type="match status" value="1"/>
</dbReference>
<dbReference type="InterPro" id="IPR048278">
    <property type="entry name" value="PFN"/>
</dbReference>
<dbReference type="InterPro" id="IPR005455">
    <property type="entry name" value="PFN_euk"/>
</dbReference>
<dbReference type="InterPro" id="IPR036140">
    <property type="entry name" value="PFN_sf"/>
</dbReference>
<dbReference type="InterPro" id="IPR027310">
    <property type="entry name" value="Profilin_CS"/>
</dbReference>
<dbReference type="PANTHER" id="PTHR11604">
    <property type="entry name" value="PROFILIN"/>
    <property type="match status" value="1"/>
</dbReference>
<dbReference type="PANTHER" id="PTHR11604:SF35">
    <property type="entry name" value="PROFILIN-3"/>
    <property type="match status" value="1"/>
</dbReference>
<dbReference type="Pfam" id="PF00235">
    <property type="entry name" value="Profilin"/>
    <property type="match status" value="1"/>
</dbReference>
<dbReference type="PRINTS" id="PR00392">
    <property type="entry name" value="PROFILIN"/>
</dbReference>
<dbReference type="PRINTS" id="PR01640">
    <property type="entry name" value="PROFILINPLNT"/>
</dbReference>
<dbReference type="SMART" id="SM00392">
    <property type="entry name" value="PROF"/>
    <property type="match status" value="1"/>
</dbReference>
<dbReference type="SUPFAM" id="SSF55770">
    <property type="entry name" value="Profilin (actin-binding protein)"/>
    <property type="match status" value="1"/>
</dbReference>
<dbReference type="PROSITE" id="PS00414">
    <property type="entry name" value="PROFILIN"/>
    <property type="match status" value="1"/>
</dbReference>
<sequence length="132" mass="13920">MSWQAYVDDHLMCDVGDGNTPASAAIIGHDGSVWAQSANFPQLKPEEVTGIMNDFNEAGFLAPTGLFLGGTKYMVIQGESGAVIRGKKGSGGATLKKTGQAIVIGIYDEPMTPGQCNLVVERLGDYLLEQGL</sequence>
<accession>Q9XG85</accession>